<reference key="1">
    <citation type="journal article" date="2009" name="Appl. Environ. Microbiol.">
        <title>Novel features of the polysaccharide-digesting gliding bacterium Flavobacterium johnsoniae as revealed by genome sequence analysis.</title>
        <authorList>
            <person name="McBride M.J."/>
            <person name="Xie G."/>
            <person name="Martens E.C."/>
            <person name="Lapidus A."/>
            <person name="Henrissat B."/>
            <person name="Rhodes R.G."/>
            <person name="Goltsman E."/>
            <person name="Wang W."/>
            <person name="Xu J."/>
            <person name="Hunnicutt D.W."/>
            <person name="Staroscik A.M."/>
            <person name="Hoover T.R."/>
            <person name="Cheng Y.Q."/>
            <person name="Stein J.L."/>
        </authorList>
    </citation>
    <scope>NUCLEOTIDE SEQUENCE [LARGE SCALE GENOMIC DNA]</scope>
    <source>
        <strain>ATCC 17061 / DSM 2064 / JCM 8514 / BCRC 14874 / CCUG 350202 / NBRC 14942 / NCIMB 11054 / UW101</strain>
    </source>
</reference>
<accession>A5FM90</accession>
<proteinExistence type="inferred from homology"/>
<sequence>MAHPKRKTSKTRRDKRRTHYKATVAQIATCPITGEAHLYHRAYWHEGKMYYRGQVVIDKSEAVA</sequence>
<evidence type="ECO:0000255" key="1">
    <source>
        <dbReference type="HAMAP-Rule" id="MF_00340"/>
    </source>
</evidence>
<evidence type="ECO:0000305" key="2"/>
<gene>
    <name evidence="1" type="primary">rpmF</name>
    <name type="ordered locus">Fjoh_0647</name>
</gene>
<organism>
    <name type="scientific">Flavobacterium johnsoniae (strain ATCC 17061 / DSM 2064 / JCM 8514 / BCRC 14874 / CCUG 350202 / NBRC 14942 / NCIMB 11054 / UW101)</name>
    <name type="common">Cytophaga johnsonae</name>
    <dbReference type="NCBI Taxonomy" id="376686"/>
    <lineage>
        <taxon>Bacteria</taxon>
        <taxon>Pseudomonadati</taxon>
        <taxon>Bacteroidota</taxon>
        <taxon>Flavobacteriia</taxon>
        <taxon>Flavobacteriales</taxon>
        <taxon>Flavobacteriaceae</taxon>
        <taxon>Flavobacterium</taxon>
    </lineage>
</organism>
<comment type="similarity">
    <text evidence="1">Belongs to the bacterial ribosomal protein bL32 family.</text>
</comment>
<protein>
    <recommendedName>
        <fullName evidence="1">Large ribosomal subunit protein bL32</fullName>
    </recommendedName>
    <alternativeName>
        <fullName evidence="2">50S ribosomal protein L32</fullName>
    </alternativeName>
</protein>
<name>RL32_FLAJ1</name>
<dbReference type="EMBL" id="CP000685">
    <property type="protein sequence ID" value="ABQ03682.1"/>
    <property type="molecule type" value="Genomic_DNA"/>
</dbReference>
<dbReference type="RefSeq" id="WP_008465217.1">
    <property type="nucleotide sequence ID" value="NZ_MUGZ01000001.1"/>
</dbReference>
<dbReference type="SMR" id="A5FM90"/>
<dbReference type="STRING" id="376686.Fjoh_0647"/>
<dbReference type="KEGG" id="fjo:Fjoh_0647"/>
<dbReference type="eggNOG" id="COG0333">
    <property type="taxonomic scope" value="Bacteria"/>
</dbReference>
<dbReference type="HOGENOM" id="CLU_129084_2_3_10"/>
<dbReference type="OrthoDB" id="9812874at2"/>
<dbReference type="Proteomes" id="UP000006694">
    <property type="component" value="Chromosome"/>
</dbReference>
<dbReference type="GO" id="GO:0015934">
    <property type="term" value="C:large ribosomal subunit"/>
    <property type="evidence" value="ECO:0007669"/>
    <property type="project" value="InterPro"/>
</dbReference>
<dbReference type="GO" id="GO:0003735">
    <property type="term" value="F:structural constituent of ribosome"/>
    <property type="evidence" value="ECO:0007669"/>
    <property type="project" value="InterPro"/>
</dbReference>
<dbReference type="GO" id="GO:0006412">
    <property type="term" value="P:translation"/>
    <property type="evidence" value="ECO:0007669"/>
    <property type="project" value="UniProtKB-UniRule"/>
</dbReference>
<dbReference type="HAMAP" id="MF_00340">
    <property type="entry name" value="Ribosomal_bL32"/>
    <property type="match status" value="1"/>
</dbReference>
<dbReference type="InterPro" id="IPR002677">
    <property type="entry name" value="Ribosomal_bL32"/>
</dbReference>
<dbReference type="InterPro" id="IPR044957">
    <property type="entry name" value="Ribosomal_bL32_bact"/>
</dbReference>
<dbReference type="InterPro" id="IPR011332">
    <property type="entry name" value="Ribosomal_zn-bd"/>
</dbReference>
<dbReference type="NCBIfam" id="TIGR01031">
    <property type="entry name" value="rpmF_bact"/>
    <property type="match status" value="1"/>
</dbReference>
<dbReference type="PANTHER" id="PTHR35534">
    <property type="entry name" value="50S RIBOSOMAL PROTEIN L32"/>
    <property type="match status" value="1"/>
</dbReference>
<dbReference type="PANTHER" id="PTHR35534:SF1">
    <property type="entry name" value="LARGE RIBOSOMAL SUBUNIT PROTEIN BL32"/>
    <property type="match status" value="1"/>
</dbReference>
<dbReference type="Pfam" id="PF01783">
    <property type="entry name" value="Ribosomal_L32p"/>
    <property type="match status" value="1"/>
</dbReference>
<dbReference type="SUPFAM" id="SSF57829">
    <property type="entry name" value="Zn-binding ribosomal proteins"/>
    <property type="match status" value="1"/>
</dbReference>
<feature type="chain" id="PRO_1000079329" description="Large ribosomal subunit protein bL32">
    <location>
        <begin position="1"/>
        <end position="64"/>
    </location>
</feature>
<keyword id="KW-0687">Ribonucleoprotein</keyword>
<keyword id="KW-0689">Ribosomal protein</keyword>